<feature type="chain" id="PRO_0000184818" description="3-methyl-2-oxobutanoate hydroxymethyltransferase">
    <location>
        <begin position="1"/>
        <end position="275"/>
    </location>
</feature>
<feature type="active site" description="Proton acceptor" evidence="1">
    <location>
        <position position="187"/>
    </location>
</feature>
<feature type="binding site" evidence="1">
    <location>
        <begin position="49"/>
        <end position="50"/>
    </location>
    <ligand>
        <name>3-methyl-2-oxobutanoate</name>
        <dbReference type="ChEBI" id="CHEBI:11851"/>
    </ligand>
</feature>
<feature type="binding site" evidence="1">
    <location>
        <position position="49"/>
    </location>
    <ligand>
        <name>Mg(2+)</name>
        <dbReference type="ChEBI" id="CHEBI:18420"/>
    </ligand>
</feature>
<feature type="binding site" evidence="1">
    <location>
        <position position="88"/>
    </location>
    <ligand>
        <name>3-methyl-2-oxobutanoate</name>
        <dbReference type="ChEBI" id="CHEBI:11851"/>
    </ligand>
</feature>
<feature type="binding site" evidence="1">
    <location>
        <position position="88"/>
    </location>
    <ligand>
        <name>Mg(2+)</name>
        <dbReference type="ChEBI" id="CHEBI:18420"/>
    </ligand>
</feature>
<feature type="binding site" evidence="1">
    <location>
        <position position="118"/>
    </location>
    <ligand>
        <name>3-methyl-2-oxobutanoate</name>
        <dbReference type="ChEBI" id="CHEBI:11851"/>
    </ligand>
</feature>
<feature type="binding site" evidence="1">
    <location>
        <position position="120"/>
    </location>
    <ligand>
        <name>Mg(2+)</name>
        <dbReference type="ChEBI" id="CHEBI:18420"/>
    </ligand>
</feature>
<sequence length="275" mass="29976">MTIHKAVKRITASEIRSRKGQEPIVSLTAYQAYSARIADPYCDLLLVGDSVGMVVHGFETTLPVSLDMMILHGQAVMRGSKRALVVVDMPFGSYEESPEQAFSNASRILAETGCSAVKLEGGVYIAETIDFLCKRGIPVMSHVGLTPQAVNRFGGFKTQGRNESNWQQIEADAAAIEKAGAFAVVVEGVVEPLAVKLTQMLSIPTIGIGASSQCDGQILVMEDMLGYGTWVPKFVRRYGVLEQEMEKAIKSYADDVKSRTFPSDEEIYKLKQKSG</sequence>
<dbReference type="EC" id="2.1.2.11" evidence="1"/>
<dbReference type="EMBL" id="BX897699">
    <property type="protein sequence ID" value="CAF27321.1"/>
    <property type="molecule type" value="Genomic_DNA"/>
</dbReference>
<dbReference type="RefSeq" id="WP_011180444.1">
    <property type="nucleotide sequence ID" value="NZ_LRIJ02000001.1"/>
</dbReference>
<dbReference type="SMR" id="Q6G5H3"/>
<dbReference type="PaxDb" id="283166-BH05130"/>
<dbReference type="EnsemblBacteria" id="CAF27321">
    <property type="protein sequence ID" value="CAF27321"/>
    <property type="gene ID" value="BH05130"/>
</dbReference>
<dbReference type="GeneID" id="92985170"/>
<dbReference type="KEGG" id="bhe:BH05130"/>
<dbReference type="eggNOG" id="COG0413">
    <property type="taxonomic scope" value="Bacteria"/>
</dbReference>
<dbReference type="OrthoDB" id="9781789at2"/>
<dbReference type="UniPathway" id="UPA00028">
    <property type="reaction ID" value="UER00003"/>
</dbReference>
<dbReference type="Proteomes" id="UP000000421">
    <property type="component" value="Chromosome"/>
</dbReference>
<dbReference type="GO" id="GO:0005737">
    <property type="term" value="C:cytoplasm"/>
    <property type="evidence" value="ECO:0007669"/>
    <property type="project" value="UniProtKB-SubCell"/>
</dbReference>
<dbReference type="GO" id="GO:0003864">
    <property type="term" value="F:3-methyl-2-oxobutanoate hydroxymethyltransferase activity"/>
    <property type="evidence" value="ECO:0007669"/>
    <property type="project" value="UniProtKB-UniRule"/>
</dbReference>
<dbReference type="GO" id="GO:0000287">
    <property type="term" value="F:magnesium ion binding"/>
    <property type="evidence" value="ECO:0007669"/>
    <property type="project" value="TreeGrafter"/>
</dbReference>
<dbReference type="GO" id="GO:0015940">
    <property type="term" value="P:pantothenate biosynthetic process"/>
    <property type="evidence" value="ECO:0007669"/>
    <property type="project" value="UniProtKB-UniRule"/>
</dbReference>
<dbReference type="CDD" id="cd06557">
    <property type="entry name" value="KPHMT-like"/>
    <property type="match status" value="1"/>
</dbReference>
<dbReference type="FunFam" id="3.20.20.60:FF:000003">
    <property type="entry name" value="3-methyl-2-oxobutanoate hydroxymethyltransferase"/>
    <property type="match status" value="1"/>
</dbReference>
<dbReference type="Gene3D" id="3.20.20.60">
    <property type="entry name" value="Phosphoenolpyruvate-binding domains"/>
    <property type="match status" value="1"/>
</dbReference>
<dbReference type="HAMAP" id="MF_00156">
    <property type="entry name" value="PanB"/>
    <property type="match status" value="1"/>
</dbReference>
<dbReference type="InterPro" id="IPR003700">
    <property type="entry name" value="Pantoate_hydroxy_MeTrfase"/>
</dbReference>
<dbReference type="InterPro" id="IPR015813">
    <property type="entry name" value="Pyrv/PenolPyrv_kinase-like_dom"/>
</dbReference>
<dbReference type="InterPro" id="IPR040442">
    <property type="entry name" value="Pyrv_kinase-like_dom_sf"/>
</dbReference>
<dbReference type="NCBIfam" id="TIGR00222">
    <property type="entry name" value="panB"/>
    <property type="match status" value="1"/>
</dbReference>
<dbReference type="NCBIfam" id="NF001452">
    <property type="entry name" value="PRK00311.1"/>
    <property type="match status" value="1"/>
</dbReference>
<dbReference type="PANTHER" id="PTHR20881">
    <property type="entry name" value="3-METHYL-2-OXOBUTANOATE HYDROXYMETHYLTRANSFERASE"/>
    <property type="match status" value="1"/>
</dbReference>
<dbReference type="PANTHER" id="PTHR20881:SF0">
    <property type="entry name" value="3-METHYL-2-OXOBUTANOATE HYDROXYMETHYLTRANSFERASE"/>
    <property type="match status" value="1"/>
</dbReference>
<dbReference type="Pfam" id="PF02548">
    <property type="entry name" value="Pantoate_transf"/>
    <property type="match status" value="1"/>
</dbReference>
<dbReference type="PIRSF" id="PIRSF000388">
    <property type="entry name" value="Pantoate_hydroxy_MeTrfase"/>
    <property type="match status" value="1"/>
</dbReference>
<dbReference type="SUPFAM" id="SSF51621">
    <property type="entry name" value="Phosphoenolpyruvate/pyruvate domain"/>
    <property type="match status" value="1"/>
</dbReference>
<evidence type="ECO:0000255" key="1">
    <source>
        <dbReference type="HAMAP-Rule" id="MF_00156"/>
    </source>
</evidence>
<comment type="function">
    <text evidence="1">Catalyzes the reversible reaction in which hydroxymethyl group from 5,10-methylenetetrahydrofolate is transferred onto alpha-ketoisovalerate to form ketopantoate.</text>
</comment>
<comment type="catalytic activity">
    <reaction evidence="1">
        <text>3-methyl-2-oxobutanoate + (6R)-5,10-methylene-5,6,7,8-tetrahydrofolate + H2O = 2-dehydropantoate + (6S)-5,6,7,8-tetrahydrofolate</text>
        <dbReference type="Rhea" id="RHEA:11824"/>
        <dbReference type="ChEBI" id="CHEBI:11561"/>
        <dbReference type="ChEBI" id="CHEBI:11851"/>
        <dbReference type="ChEBI" id="CHEBI:15377"/>
        <dbReference type="ChEBI" id="CHEBI:15636"/>
        <dbReference type="ChEBI" id="CHEBI:57453"/>
        <dbReference type="EC" id="2.1.2.11"/>
    </reaction>
</comment>
<comment type="cofactor">
    <cofactor evidence="1">
        <name>Mg(2+)</name>
        <dbReference type="ChEBI" id="CHEBI:18420"/>
    </cofactor>
    <text evidence="1">Binds 1 Mg(2+) ion per subunit.</text>
</comment>
<comment type="pathway">
    <text evidence="1">Cofactor biosynthesis; (R)-pantothenate biosynthesis; (R)-pantoate from 3-methyl-2-oxobutanoate: step 1/2.</text>
</comment>
<comment type="subunit">
    <text evidence="1">Homodecamer; pentamer of dimers.</text>
</comment>
<comment type="subcellular location">
    <subcellularLocation>
        <location evidence="1">Cytoplasm</location>
    </subcellularLocation>
</comment>
<comment type="similarity">
    <text evidence="1">Belongs to the PanB family.</text>
</comment>
<accession>Q6G5H3</accession>
<protein>
    <recommendedName>
        <fullName evidence="1">3-methyl-2-oxobutanoate hydroxymethyltransferase</fullName>
        <ecNumber evidence="1">2.1.2.11</ecNumber>
    </recommendedName>
    <alternativeName>
        <fullName evidence="1">Ketopantoate hydroxymethyltransferase</fullName>
        <shortName evidence="1">KPHMT</shortName>
    </alternativeName>
</protein>
<reference key="1">
    <citation type="journal article" date="2004" name="Proc. Natl. Acad. Sci. U.S.A.">
        <title>The louse-borne human pathogen Bartonella quintana is a genomic derivative of the zoonotic agent Bartonella henselae.</title>
        <authorList>
            <person name="Alsmark U.C.M."/>
            <person name="Frank A.C."/>
            <person name="Karlberg E.O."/>
            <person name="Legault B.-A."/>
            <person name="Ardell D.H."/>
            <person name="Canbaeck B."/>
            <person name="Eriksson A.-S."/>
            <person name="Naeslund A.K."/>
            <person name="Handley S.A."/>
            <person name="Huvet M."/>
            <person name="La Scola B."/>
            <person name="Holmberg M."/>
            <person name="Andersson S.G.E."/>
        </authorList>
    </citation>
    <scope>NUCLEOTIDE SEQUENCE [LARGE SCALE GENOMIC DNA]</scope>
    <source>
        <strain>ATCC 49882 / DSM 28221 / CCUG 30454 / Houston 1</strain>
    </source>
</reference>
<name>PANB_BARHE</name>
<proteinExistence type="inferred from homology"/>
<gene>
    <name evidence="1" type="primary">panB</name>
    <name type="ordered locus">BH05130</name>
</gene>
<keyword id="KW-0963">Cytoplasm</keyword>
<keyword id="KW-0460">Magnesium</keyword>
<keyword id="KW-0479">Metal-binding</keyword>
<keyword id="KW-0566">Pantothenate biosynthesis</keyword>
<keyword id="KW-0808">Transferase</keyword>
<organism>
    <name type="scientific">Bartonella henselae (strain ATCC 49882 / DSM 28221 / CCUG 30454 / Houston 1)</name>
    <name type="common">Rochalimaea henselae</name>
    <dbReference type="NCBI Taxonomy" id="283166"/>
    <lineage>
        <taxon>Bacteria</taxon>
        <taxon>Pseudomonadati</taxon>
        <taxon>Pseudomonadota</taxon>
        <taxon>Alphaproteobacteria</taxon>
        <taxon>Hyphomicrobiales</taxon>
        <taxon>Bartonellaceae</taxon>
        <taxon>Bartonella</taxon>
    </lineage>
</organism>